<comment type="catalytic activity">
    <reaction>
        <text>Catalyzes the rearrangement of -S-S- bonds in proteins.</text>
        <dbReference type="EC" id="5.3.4.1"/>
    </reaction>
</comment>
<comment type="subcellular location">
    <subcellularLocation>
        <location evidence="3">Endoplasmic reticulum lumen</location>
    </subcellularLocation>
</comment>
<comment type="similarity">
    <text evidence="5">Belongs to the protein disulfide isomerase family.</text>
</comment>
<feature type="signal peptide" evidence="1">
    <location>
        <begin position="1"/>
        <end position="21"/>
    </location>
</feature>
<feature type="chain" id="PRO_0000388368" description="Putative protein disulfide-isomerase DDB_G0275025">
    <location>
        <begin position="22"/>
        <end position="409"/>
    </location>
</feature>
<feature type="domain" description="Thioredoxin" evidence="2">
    <location>
        <begin position="28"/>
        <end position="140"/>
    </location>
</feature>
<feature type="region of interest" description="Disordered" evidence="4">
    <location>
        <begin position="245"/>
        <end position="273"/>
    </location>
</feature>
<feature type="short sequence motif" description="Prevents secretion from ER" evidence="3">
    <location>
        <begin position="406"/>
        <end position="409"/>
    </location>
</feature>
<feature type="compositionally biased region" description="Low complexity" evidence="4">
    <location>
        <begin position="247"/>
        <end position="259"/>
    </location>
</feature>
<feature type="compositionally biased region" description="Basic and acidic residues" evidence="4">
    <location>
        <begin position="260"/>
        <end position="273"/>
    </location>
</feature>
<feature type="disulfide bond" description="Redox-active" evidence="2">
    <location>
        <begin position="57"/>
        <end position="60"/>
    </location>
</feature>
<gene>
    <name type="ORF">DDB_G0275025</name>
</gene>
<proteinExistence type="evidence at protein level"/>
<dbReference type="EC" id="5.3.4.1"/>
<dbReference type="EMBL" id="AAFI02000013">
    <property type="protein sequence ID" value="EAL69793.1"/>
    <property type="molecule type" value="Genomic_DNA"/>
</dbReference>
<dbReference type="RefSeq" id="XP_643858.1">
    <property type="nucleotide sequence ID" value="XM_638766.1"/>
</dbReference>
<dbReference type="SMR" id="Q869Z0"/>
<dbReference type="FunCoup" id="Q869Z0">
    <property type="interactions" value="201"/>
</dbReference>
<dbReference type="STRING" id="44689.Q869Z0"/>
<dbReference type="PaxDb" id="44689-DDB0167375"/>
<dbReference type="EnsemblProtists" id="EAL69793">
    <property type="protein sequence ID" value="EAL69793"/>
    <property type="gene ID" value="DDB_G0275025"/>
</dbReference>
<dbReference type="GeneID" id="8619909"/>
<dbReference type="KEGG" id="ddi:DDB_G0275025"/>
<dbReference type="dictyBase" id="DDB_G0275025"/>
<dbReference type="VEuPathDB" id="AmoebaDB:DDB_G0275025"/>
<dbReference type="eggNOG" id="KOG0191">
    <property type="taxonomic scope" value="Eukaryota"/>
</dbReference>
<dbReference type="HOGENOM" id="CLU_030311_0_0_1"/>
<dbReference type="InParanoid" id="Q869Z0"/>
<dbReference type="OMA" id="IPDWIET"/>
<dbReference type="PhylomeDB" id="Q869Z0"/>
<dbReference type="PRO" id="PR:Q869Z0"/>
<dbReference type="Proteomes" id="UP000002195">
    <property type="component" value="Chromosome 2"/>
</dbReference>
<dbReference type="GO" id="GO:0005783">
    <property type="term" value="C:endoplasmic reticulum"/>
    <property type="evidence" value="ECO:0000318"/>
    <property type="project" value="GO_Central"/>
</dbReference>
<dbReference type="GO" id="GO:0005788">
    <property type="term" value="C:endoplasmic reticulum lumen"/>
    <property type="evidence" value="ECO:0007669"/>
    <property type="project" value="UniProtKB-SubCell"/>
</dbReference>
<dbReference type="GO" id="GO:0003756">
    <property type="term" value="F:protein disulfide isomerase activity"/>
    <property type="evidence" value="ECO:0007669"/>
    <property type="project" value="UniProtKB-EC"/>
</dbReference>
<dbReference type="GO" id="GO:0015035">
    <property type="term" value="F:protein-disulfide reductase activity"/>
    <property type="evidence" value="ECO:0000318"/>
    <property type="project" value="GO_Central"/>
</dbReference>
<dbReference type="GO" id="GO:0034976">
    <property type="term" value="P:response to endoplasmic reticulum stress"/>
    <property type="evidence" value="ECO:0000318"/>
    <property type="project" value="GO_Central"/>
</dbReference>
<dbReference type="Gene3D" id="3.40.30.10">
    <property type="entry name" value="Glutaredoxin"/>
    <property type="match status" value="3"/>
</dbReference>
<dbReference type="InterPro" id="IPR005788">
    <property type="entry name" value="PDI_thioredoxin-like_dom"/>
</dbReference>
<dbReference type="InterPro" id="IPR036249">
    <property type="entry name" value="Thioredoxin-like_sf"/>
</dbReference>
<dbReference type="InterPro" id="IPR017937">
    <property type="entry name" value="Thioredoxin_CS"/>
</dbReference>
<dbReference type="InterPro" id="IPR013766">
    <property type="entry name" value="Thioredoxin_domain"/>
</dbReference>
<dbReference type="NCBIfam" id="TIGR01126">
    <property type="entry name" value="pdi_dom"/>
    <property type="match status" value="1"/>
</dbReference>
<dbReference type="PANTHER" id="PTHR45815">
    <property type="entry name" value="PROTEIN DISULFIDE-ISOMERASE A6"/>
    <property type="match status" value="1"/>
</dbReference>
<dbReference type="PANTHER" id="PTHR45815:SF3">
    <property type="entry name" value="PROTEIN DISULFIDE-ISOMERASE A6"/>
    <property type="match status" value="1"/>
</dbReference>
<dbReference type="Pfam" id="PF24541">
    <property type="entry name" value="Thioredox_PDIA6_C"/>
    <property type="match status" value="1"/>
</dbReference>
<dbReference type="Pfam" id="PF00085">
    <property type="entry name" value="Thioredoxin"/>
    <property type="match status" value="1"/>
</dbReference>
<dbReference type="PRINTS" id="PR00421">
    <property type="entry name" value="THIOREDOXIN"/>
</dbReference>
<dbReference type="SUPFAM" id="SSF52833">
    <property type="entry name" value="Thioredoxin-like"/>
    <property type="match status" value="3"/>
</dbReference>
<dbReference type="PROSITE" id="PS00014">
    <property type="entry name" value="ER_TARGET"/>
    <property type="match status" value="1"/>
</dbReference>
<dbReference type="PROSITE" id="PS00194">
    <property type="entry name" value="THIOREDOXIN_1"/>
    <property type="match status" value="1"/>
</dbReference>
<dbReference type="PROSITE" id="PS51352">
    <property type="entry name" value="THIOREDOXIN_2"/>
    <property type="match status" value="1"/>
</dbReference>
<reference key="1">
    <citation type="journal article" date="2002" name="Nature">
        <title>Sequence and analysis of chromosome 2 of Dictyostelium discoideum.</title>
        <authorList>
            <person name="Gloeckner G."/>
            <person name="Eichinger L."/>
            <person name="Szafranski K."/>
            <person name="Pachebat J.A."/>
            <person name="Bankier A.T."/>
            <person name="Dear P.H."/>
            <person name="Lehmann R."/>
            <person name="Baumgart C."/>
            <person name="Parra G."/>
            <person name="Abril J.F."/>
            <person name="Guigo R."/>
            <person name="Kumpf K."/>
            <person name="Tunggal B."/>
            <person name="Cox E.C."/>
            <person name="Quail M.A."/>
            <person name="Platzer M."/>
            <person name="Rosenthal A."/>
            <person name="Noegel A.A."/>
        </authorList>
    </citation>
    <scope>NUCLEOTIDE SEQUENCE [LARGE SCALE GENOMIC DNA]</scope>
    <source>
        <strain>AX4</strain>
    </source>
</reference>
<reference key="2">
    <citation type="journal article" date="2005" name="Nature">
        <title>The genome of the social amoeba Dictyostelium discoideum.</title>
        <authorList>
            <person name="Eichinger L."/>
            <person name="Pachebat J.A."/>
            <person name="Gloeckner G."/>
            <person name="Rajandream M.A."/>
            <person name="Sucgang R."/>
            <person name="Berriman M."/>
            <person name="Song J."/>
            <person name="Olsen R."/>
            <person name="Szafranski K."/>
            <person name="Xu Q."/>
            <person name="Tunggal B."/>
            <person name="Kummerfeld S."/>
            <person name="Madera M."/>
            <person name="Konfortov B.A."/>
            <person name="Rivero F."/>
            <person name="Bankier A.T."/>
            <person name="Lehmann R."/>
            <person name="Hamlin N."/>
            <person name="Davies R."/>
            <person name="Gaudet P."/>
            <person name="Fey P."/>
            <person name="Pilcher K."/>
            <person name="Chen G."/>
            <person name="Saunders D."/>
            <person name="Sodergren E.J."/>
            <person name="Davis P."/>
            <person name="Kerhornou A."/>
            <person name="Nie X."/>
            <person name="Hall N."/>
            <person name="Anjard C."/>
            <person name="Hemphill L."/>
            <person name="Bason N."/>
            <person name="Farbrother P."/>
            <person name="Desany B."/>
            <person name="Just E."/>
            <person name="Morio T."/>
            <person name="Rost R."/>
            <person name="Churcher C.M."/>
            <person name="Cooper J."/>
            <person name="Haydock S."/>
            <person name="van Driessche N."/>
            <person name="Cronin A."/>
            <person name="Goodhead I."/>
            <person name="Muzny D.M."/>
            <person name="Mourier T."/>
            <person name="Pain A."/>
            <person name="Lu M."/>
            <person name="Harper D."/>
            <person name="Lindsay R."/>
            <person name="Hauser H."/>
            <person name="James K.D."/>
            <person name="Quiles M."/>
            <person name="Madan Babu M."/>
            <person name="Saito T."/>
            <person name="Buchrieser C."/>
            <person name="Wardroper A."/>
            <person name="Felder M."/>
            <person name="Thangavelu M."/>
            <person name="Johnson D."/>
            <person name="Knights A."/>
            <person name="Loulseged H."/>
            <person name="Mungall K.L."/>
            <person name="Oliver K."/>
            <person name="Price C."/>
            <person name="Quail M.A."/>
            <person name="Urushihara H."/>
            <person name="Hernandez J."/>
            <person name="Rabbinowitsch E."/>
            <person name="Steffen D."/>
            <person name="Sanders M."/>
            <person name="Ma J."/>
            <person name="Kohara Y."/>
            <person name="Sharp S."/>
            <person name="Simmonds M.N."/>
            <person name="Spiegler S."/>
            <person name="Tivey A."/>
            <person name="Sugano S."/>
            <person name="White B."/>
            <person name="Walker D."/>
            <person name="Woodward J.R."/>
            <person name="Winckler T."/>
            <person name="Tanaka Y."/>
            <person name="Shaulsky G."/>
            <person name="Schleicher M."/>
            <person name="Weinstock G.M."/>
            <person name="Rosenthal A."/>
            <person name="Cox E.C."/>
            <person name="Chisholm R.L."/>
            <person name="Gibbs R.A."/>
            <person name="Loomis W.F."/>
            <person name="Platzer M."/>
            <person name="Kay R.R."/>
            <person name="Williams J.G."/>
            <person name="Dear P.H."/>
            <person name="Noegel A.A."/>
            <person name="Barrell B.G."/>
            <person name="Kuspa A."/>
        </authorList>
    </citation>
    <scope>NUCLEOTIDE SEQUENCE [LARGE SCALE GENOMIC DNA]</scope>
    <source>
        <strain>AX4</strain>
    </source>
</reference>
<reference key="3">
    <citation type="submission" date="2009-07" db="UniProtKB">
        <authorList>
            <person name="Bienvenut W.V."/>
            <person name="Ura S."/>
            <person name="Insall R.H."/>
        </authorList>
    </citation>
    <scope>PROTEIN SEQUENCE OF 146-171; 178-185; 237-243 AND 389-397</scope>
    <scope>IDENTIFICATION BY MASS SPECTROMETRY</scope>
    <source>
        <strain>AX2</strain>
    </source>
</reference>
<keyword id="KW-0903">Direct protein sequencing</keyword>
<keyword id="KW-1015">Disulfide bond</keyword>
<keyword id="KW-0256">Endoplasmic reticulum</keyword>
<keyword id="KW-0413">Isomerase</keyword>
<keyword id="KW-0676">Redox-active center</keyword>
<keyword id="KW-1185">Reference proteome</keyword>
<keyword id="KW-0677">Repeat</keyword>
<keyword id="KW-0732">Signal</keyword>
<sequence length="409" mass="46536">MKLINICIFIFAIICIESTFGFYTDNSNVINLTKKNFQQQVLNSQQNWMVEFYAPWCGHCKSLKPEYEKVSNNLKGLVKIGAINCDEEKELCGQYQIQGFPTLKFFSTNPKTGKKGQPEDYQGARSASEIAKFSLAKLPSNHIQKVSQDNINKFLTGTSDAKALLFTDKPKTTDLYKALSVDFFKTLTLGEARNLNKETLEKFNIDKFPTLLVFTNDDGETFTKFDGKLTHSTIYKFLEPFSKKSNNDNNNNNNNNNNEESTKTTTTEKDPASEKFIEIKDEKSFEKSCSTGLCIVALFDQSSIDDKELNEKYLELLNTVSQNFIGRMKFVWVDVSVHDKIVPQFDLSGTPNIFVINNSKKRYTPFMGSFSDESLNSFFKSVLSGLKKAIPFTDSPKFNSQQKKQKDEL</sequence>
<protein>
    <recommendedName>
        <fullName>Putative protein disulfide-isomerase DDB_G0275025</fullName>
        <ecNumber>5.3.4.1</ecNumber>
    </recommendedName>
</protein>
<name>Y5025_DICDI</name>
<accession>Q869Z0</accession>
<accession>Q553V3</accession>
<organism>
    <name type="scientific">Dictyostelium discoideum</name>
    <name type="common">Social amoeba</name>
    <dbReference type="NCBI Taxonomy" id="44689"/>
    <lineage>
        <taxon>Eukaryota</taxon>
        <taxon>Amoebozoa</taxon>
        <taxon>Evosea</taxon>
        <taxon>Eumycetozoa</taxon>
        <taxon>Dictyostelia</taxon>
        <taxon>Dictyosteliales</taxon>
        <taxon>Dictyosteliaceae</taxon>
        <taxon>Dictyostelium</taxon>
    </lineage>
</organism>
<evidence type="ECO:0000255" key="1"/>
<evidence type="ECO:0000255" key="2">
    <source>
        <dbReference type="PROSITE-ProRule" id="PRU00691"/>
    </source>
</evidence>
<evidence type="ECO:0000255" key="3">
    <source>
        <dbReference type="PROSITE-ProRule" id="PRU10138"/>
    </source>
</evidence>
<evidence type="ECO:0000256" key="4">
    <source>
        <dbReference type="SAM" id="MobiDB-lite"/>
    </source>
</evidence>
<evidence type="ECO:0000305" key="5"/>